<organism>
    <name type="scientific">Kluyveromyces lactis (strain ATCC 8585 / CBS 2359 / DSM 70799 / NBRC 1267 / NRRL Y-1140 / WM37)</name>
    <name type="common">Yeast</name>
    <name type="synonym">Candida sphaerica</name>
    <dbReference type="NCBI Taxonomy" id="284590"/>
    <lineage>
        <taxon>Eukaryota</taxon>
        <taxon>Fungi</taxon>
        <taxon>Dikarya</taxon>
        <taxon>Ascomycota</taxon>
        <taxon>Saccharomycotina</taxon>
        <taxon>Saccharomycetes</taxon>
        <taxon>Saccharomycetales</taxon>
        <taxon>Saccharomycetaceae</taxon>
        <taxon>Kluyveromyces</taxon>
    </lineage>
</organism>
<name>PALH_KLULA</name>
<sequence length="519" mass="59667">MTGRSRWRYHFPSEDYSSCQGVQLDEGVLIWNKLPDKFAYIKSLVFTSNCQDGTPLYSSFVELEDECPYLPIVAFDWNSYINNDGYTGPFKYSIYSVIYSVTANFIITVFLTVIVFINVPTKPSRKASYILKLGALLASLNLSIFVIRVWKNIAENYTYNGYVSSTSFLNLLWGDKVFAGIDLVVVFLLQISQVQIVMRFFDRMQEKRMVFYFGLFLILVTQILWVIPTLSPVPTKDSDSDIDILPPFVYLFRIALSTCYASVICFHVLTKKSLCFRGRMIFLTLLTIFTVFLHPTFFIVDVSNLWIDDLSEIFNTTCYLASTVIVLEWTNRIHTMERKIHAASVLGRPIYEDEEQNFHFAIYALRMQNAMKMHRDGHVHDHGHTCDSNDNANVSLQNANTNDSSSIITDNSSQRTSTFGTMATDQVTLHTQQGERNITQFKRAETFWNKCHHVLESIVYYTDNVMVNALAGSKTFDSFTNDAEKLLKTERLRKTVGLDEPEDVYLYRKTTMSSDSVME</sequence>
<keyword id="KW-1003">Cell membrane</keyword>
<keyword id="KW-0472">Membrane</keyword>
<keyword id="KW-1185">Reference proteome</keyword>
<keyword id="KW-0812">Transmembrane</keyword>
<keyword id="KW-1133">Transmembrane helix</keyword>
<proteinExistence type="inferred from homology"/>
<comment type="function">
    <text evidence="1">Required for the proteolytic cleavage of the transcription factor RIM101 in response to alkaline ambient pH.</text>
</comment>
<comment type="subcellular location">
    <subcellularLocation>
        <location evidence="1">Cell membrane</location>
        <topology evidence="1">Multi-pass membrane protein</topology>
    </subcellularLocation>
</comment>
<comment type="similarity">
    <text evidence="3">Belongs to the palH/RIM21 family.</text>
</comment>
<protein>
    <recommendedName>
        <fullName>pH-response regulator protein palH/RIM21</fullName>
    </recommendedName>
</protein>
<reference key="1">
    <citation type="journal article" date="2004" name="Nature">
        <title>Genome evolution in yeasts.</title>
        <authorList>
            <person name="Dujon B."/>
            <person name="Sherman D."/>
            <person name="Fischer G."/>
            <person name="Durrens P."/>
            <person name="Casaregola S."/>
            <person name="Lafontaine I."/>
            <person name="de Montigny J."/>
            <person name="Marck C."/>
            <person name="Neuveglise C."/>
            <person name="Talla E."/>
            <person name="Goffard N."/>
            <person name="Frangeul L."/>
            <person name="Aigle M."/>
            <person name="Anthouard V."/>
            <person name="Babour A."/>
            <person name="Barbe V."/>
            <person name="Barnay S."/>
            <person name="Blanchin S."/>
            <person name="Beckerich J.-M."/>
            <person name="Beyne E."/>
            <person name="Bleykasten C."/>
            <person name="Boisrame A."/>
            <person name="Boyer J."/>
            <person name="Cattolico L."/>
            <person name="Confanioleri F."/>
            <person name="de Daruvar A."/>
            <person name="Despons L."/>
            <person name="Fabre E."/>
            <person name="Fairhead C."/>
            <person name="Ferry-Dumazet H."/>
            <person name="Groppi A."/>
            <person name="Hantraye F."/>
            <person name="Hennequin C."/>
            <person name="Jauniaux N."/>
            <person name="Joyet P."/>
            <person name="Kachouri R."/>
            <person name="Kerrest A."/>
            <person name="Koszul R."/>
            <person name="Lemaire M."/>
            <person name="Lesur I."/>
            <person name="Ma L."/>
            <person name="Muller H."/>
            <person name="Nicaud J.-M."/>
            <person name="Nikolski M."/>
            <person name="Oztas S."/>
            <person name="Ozier-Kalogeropoulos O."/>
            <person name="Pellenz S."/>
            <person name="Potier S."/>
            <person name="Richard G.-F."/>
            <person name="Straub M.-L."/>
            <person name="Suleau A."/>
            <person name="Swennen D."/>
            <person name="Tekaia F."/>
            <person name="Wesolowski-Louvel M."/>
            <person name="Westhof E."/>
            <person name="Wirth B."/>
            <person name="Zeniou-Meyer M."/>
            <person name="Zivanovic Y."/>
            <person name="Bolotin-Fukuhara M."/>
            <person name="Thierry A."/>
            <person name="Bouchier C."/>
            <person name="Caudron B."/>
            <person name="Scarpelli C."/>
            <person name="Gaillardin C."/>
            <person name="Weissenbach J."/>
            <person name="Wincker P."/>
            <person name="Souciet J.-L."/>
        </authorList>
    </citation>
    <scope>NUCLEOTIDE SEQUENCE [LARGE SCALE GENOMIC DNA]</scope>
    <source>
        <strain>ATCC 8585 / CBS 2359 / DSM 70799 / NBRC 1267 / NRRL Y-1140 / WM37</strain>
    </source>
</reference>
<feature type="chain" id="PRO_0000058201" description="pH-response regulator protein palH/RIM21">
    <location>
        <begin position="1"/>
        <end position="519"/>
    </location>
</feature>
<feature type="topological domain" description="Extracellular" evidence="2">
    <location>
        <begin position="1"/>
        <end position="96"/>
    </location>
</feature>
<feature type="transmembrane region" description="Helical" evidence="2">
    <location>
        <begin position="97"/>
        <end position="117"/>
    </location>
</feature>
<feature type="topological domain" description="Cytoplasmic" evidence="2">
    <location>
        <begin position="118"/>
        <end position="126"/>
    </location>
</feature>
<feature type="transmembrane region" description="Helical" evidence="2">
    <location>
        <begin position="127"/>
        <end position="147"/>
    </location>
</feature>
<feature type="topological domain" description="Extracellular" evidence="2">
    <location>
        <begin position="148"/>
        <end position="176"/>
    </location>
</feature>
<feature type="transmembrane region" description="Helical" evidence="2">
    <location>
        <begin position="177"/>
        <end position="197"/>
    </location>
</feature>
<feature type="topological domain" description="Cytoplasmic" evidence="2">
    <location>
        <begin position="198"/>
        <end position="209"/>
    </location>
</feature>
<feature type="transmembrane region" description="Helical" evidence="2">
    <location>
        <begin position="210"/>
        <end position="230"/>
    </location>
</feature>
<feature type="topological domain" description="Extracellular" evidence="2">
    <location>
        <begin position="231"/>
        <end position="243"/>
    </location>
</feature>
<feature type="transmembrane region" description="Helical" evidence="2">
    <location>
        <begin position="244"/>
        <end position="264"/>
    </location>
</feature>
<feature type="topological domain" description="Cytoplasmic" evidence="2">
    <location>
        <begin position="265"/>
        <end position="279"/>
    </location>
</feature>
<feature type="transmembrane region" description="Helical" evidence="2">
    <location>
        <begin position="280"/>
        <end position="300"/>
    </location>
</feature>
<feature type="topological domain" description="Extracellular" evidence="2">
    <location>
        <begin position="301"/>
        <end position="309"/>
    </location>
</feature>
<feature type="transmembrane region" description="Helical" evidence="2">
    <location>
        <begin position="310"/>
        <end position="330"/>
    </location>
</feature>
<feature type="topological domain" description="Cytoplasmic" evidence="2">
    <location>
        <begin position="331"/>
        <end position="519"/>
    </location>
</feature>
<accession>Q6CXK7</accession>
<evidence type="ECO:0000250" key="1"/>
<evidence type="ECO:0000255" key="2"/>
<evidence type="ECO:0000305" key="3"/>
<gene>
    <name type="primary">RIM21</name>
    <name type="ordered locus">KLLA0A07469g</name>
</gene>
<dbReference type="EMBL" id="CR382121">
    <property type="protein sequence ID" value="CAH02920.1"/>
    <property type="molecule type" value="Genomic_DNA"/>
</dbReference>
<dbReference type="RefSeq" id="XP_451332.1">
    <property type="nucleotide sequence ID" value="XM_451332.1"/>
</dbReference>
<dbReference type="FunCoup" id="Q6CXK7">
    <property type="interactions" value="62"/>
</dbReference>
<dbReference type="STRING" id="284590.Q6CXK7"/>
<dbReference type="PaxDb" id="284590-Q6CXK7"/>
<dbReference type="KEGG" id="kla:KLLA0_A07469g"/>
<dbReference type="eggNOG" id="ENOG502QWMT">
    <property type="taxonomic scope" value="Eukaryota"/>
</dbReference>
<dbReference type="HOGENOM" id="CLU_026111_0_0_1"/>
<dbReference type="InParanoid" id="Q6CXK7"/>
<dbReference type="OMA" id="CVVIPWE"/>
<dbReference type="Proteomes" id="UP000000598">
    <property type="component" value="Chromosome A"/>
</dbReference>
<dbReference type="GO" id="GO:0005886">
    <property type="term" value="C:plasma membrane"/>
    <property type="evidence" value="ECO:0007669"/>
    <property type="project" value="UniProtKB-SubCell"/>
</dbReference>
<dbReference type="GO" id="GO:0071467">
    <property type="term" value="P:cellular response to pH"/>
    <property type="evidence" value="ECO:0007669"/>
    <property type="project" value="TreeGrafter"/>
</dbReference>
<dbReference type="InterPro" id="IPR014844">
    <property type="entry name" value="PalH"/>
</dbReference>
<dbReference type="PANTHER" id="PTHR35779">
    <property type="entry name" value="PH-RESPONSE REGULATOR PROTEIN PALH/RIM21"/>
    <property type="match status" value="1"/>
</dbReference>
<dbReference type="PANTHER" id="PTHR35779:SF1">
    <property type="entry name" value="PH-RESPONSE REGULATOR PROTEIN PALH_RIM21"/>
    <property type="match status" value="1"/>
</dbReference>
<dbReference type="Pfam" id="PF08733">
    <property type="entry name" value="PalH"/>
    <property type="match status" value="1"/>
</dbReference>